<accession>P05704</accession>
<accession>P77448</accession>
<feature type="chain" id="PRO_0000110540" description="Methyl-accepting chemotaxis protein III">
    <location>
        <begin position="1"/>
        <end position="546"/>
    </location>
</feature>
<feature type="topological domain" description="Cytoplasmic" evidence="1">
    <location>
        <begin position="1"/>
        <end position="23"/>
    </location>
</feature>
<feature type="transmembrane region" description="Helical" evidence="1">
    <location>
        <begin position="24"/>
        <end position="44"/>
    </location>
</feature>
<feature type="topological domain" description="Periplasmic" evidence="1">
    <location>
        <begin position="45"/>
        <end position="201"/>
    </location>
</feature>
<feature type="transmembrane region" description="Helical" evidence="1">
    <location>
        <begin position="202"/>
        <end position="222"/>
    </location>
</feature>
<feature type="topological domain" description="Cytoplasmic" evidence="1">
    <location>
        <begin position="223"/>
        <end position="546"/>
    </location>
</feature>
<feature type="domain" description="HAMP" evidence="2">
    <location>
        <begin position="224"/>
        <end position="276"/>
    </location>
</feature>
<feature type="domain" description="Methyl-accepting transducer" evidence="3">
    <location>
        <begin position="281"/>
        <end position="510"/>
    </location>
</feature>
<feature type="modified residue" description="Glutamate methyl ester (Glu)" evidence="6 7">
    <location>
        <position position="305"/>
    </location>
</feature>
<feature type="modified residue" description="Glutamate methyl ester (Gln)" evidence="6 7">
    <location>
        <position position="312"/>
    </location>
</feature>
<feature type="modified residue" description="Glutamate methyl ester (Gln)" evidence="6 7">
    <location>
        <position position="319"/>
    </location>
</feature>
<feature type="modified residue" description="Glutamate methyl ester (Glu)" evidence="6 7">
    <location>
        <position position="501"/>
    </location>
</feature>
<feature type="modified residue" description="Glutamate methyl ester (Glu)" evidence="6">
    <location>
        <position position="510"/>
    </location>
</feature>
<comment type="function">
    <text>Mediates taxis to the sugars ribose and galactose via an interaction with the periplasmic ribose- or galactose-binding proteins.</text>
</comment>
<comment type="function">
    <text>Chemotactic-signal transducers respond to changes in the concentration of attractants and repellents in the environment, transduce a signal from the outside to the inside of the cell, and facilitate sensory adaptation through the variation of the level of methylation. Attractants increase the level of methylation while repellents decrease the level of methylation, the methyl groups are added by the methyltransferase CheR and removed by the methylesterase CheB.</text>
</comment>
<comment type="interaction">
    <interactant intactId="EBI-557436">
        <id>P05704</id>
    </interactant>
    <interactant intactId="EBI-562037">
        <id>P45543</id>
        <label>frlD</label>
    </interactant>
    <organismsDiffer>false</organismsDiffer>
    <experiments>5</experiments>
</comment>
<comment type="subcellular location">
    <subcellularLocation>
        <location evidence="4 5">Cell inner membrane</location>
        <topology evidence="4 5">Multi-pass membrane protein</topology>
    </subcellularLocation>
    <text>Found predominantly at cell poles.</text>
</comment>
<comment type="similarity">
    <text evidence="8">Belongs to the methyl-accepting chemotaxis (MCP) protein family.</text>
</comment>
<protein>
    <recommendedName>
        <fullName>Methyl-accepting chemotaxis protein III</fullName>
        <shortName>MCP-III</shortName>
    </recommendedName>
    <alternativeName>
        <fullName>Ribose and galactose chemoreceptor protein</fullName>
    </alternativeName>
</protein>
<evidence type="ECO:0000255" key="1"/>
<evidence type="ECO:0000255" key="2">
    <source>
        <dbReference type="PROSITE-ProRule" id="PRU00102"/>
    </source>
</evidence>
<evidence type="ECO:0000255" key="3">
    <source>
        <dbReference type="PROSITE-ProRule" id="PRU00284"/>
    </source>
</evidence>
<evidence type="ECO:0000269" key="4">
    <source>
    </source>
</evidence>
<evidence type="ECO:0000269" key="5">
    <source>
    </source>
</evidence>
<evidence type="ECO:0000269" key="6">
    <source>
    </source>
</evidence>
<evidence type="ECO:0000269" key="7">
    <source>
    </source>
</evidence>
<evidence type="ECO:0000305" key="8"/>
<gene>
    <name type="primary">trg</name>
    <name type="ordered locus">b1421</name>
    <name type="ordered locus">JW1417</name>
</gene>
<keyword id="KW-0997">Cell inner membrane</keyword>
<keyword id="KW-1003">Cell membrane</keyword>
<keyword id="KW-0145">Chemotaxis</keyword>
<keyword id="KW-0472">Membrane</keyword>
<keyword id="KW-0488">Methylation</keyword>
<keyword id="KW-1185">Reference proteome</keyword>
<keyword id="KW-0807">Transducer</keyword>
<keyword id="KW-0812">Transmembrane</keyword>
<keyword id="KW-1133">Transmembrane helix</keyword>
<proteinExistence type="evidence at protein level"/>
<dbReference type="EMBL" id="K02073">
    <property type="protein sequence ID" value="AAA81329.2"/>
    <property type="molecule type" value="Genomic_DNA"/>
</dbReference>
<dbReference type="EMBL" id="U00096">
    <property type="protein sequence ID" value="AAC74503.1"/>
    <property type="molecule type" value="Genomic_DNA"/>
</dbReference>
<dbReference type="EMBL" id="AP009048">
    <property type="protein sequence ID" value="BAA15044.1"/>
    <property type="molecule type" value="Genomic_DNA"/>
</dbReference>
<dbReference type="PIR" id="H64893">
    <property type="entry name" value="QREC3M"/>
</dbReference>
<dbReference type="RefSeq" id="NP_415938.1">
    <property type="nucleotide sequence ID" value="NC_000913.3"/>
</dbReference>
<dbReference type="RefSeq" id="WP_001098559.1">
    <property type="nucleotide sequence ID" value="NZ_STEB01000005.1"/>
</dbReference>
<dbReference type="SMR" id="P05704"/>
<dbReference type="BioGRID" id="4261384">
    <property type="interactions" value="399"/>
</dbReference>
<dbReference type="BioGRID" id="850357">
    <property type="interactions" value="1"/>
</dbReference>
<dbReference type="DIP" id="DIP-11027N"/>
<dbReference type="FunCoup" id="P05704">
    <property type="interactions" value="243"/>
</dbReference>
<dbReference type="IntAct" id="P05704">
    <property type="interactions" value="5"/>
</dbReference>
<dbReference type="STRING" id="511145.b1421"/>
<dbReference type="PaxDb" id="511145-b1421"/>
<dbReference type="EnsemblBacteria" id="AAC74503">
    <property type="protein sequence ID" value="AAC74503"/>
    <property type="gene ID" value="b1421"/>
</dbReference>
<dbReference type="GeneID" id="945995"/>
<dbReference type="KEGG" id="ecj:JW1417"/>
<dbReference type="KEGG" id="eco:b1421"/>
<dbReference type="KEGG" id="ecoc:C3026_08275"/>
<dbReference type="PATRIC" id="fig|1411691.4.peg.849"/>
<dbReference type="EchoBASE" id="EB1011"/>
<dbReference type="eggNOG" id="COG0840">
    <property type="taxonomic scope" value="Bacteria"/>
</dbReference>
<dbReference type="HOGENOM" id="CLU_000445_107_16_6"/>
<dbReference type="InParanoid" id="P05704"/>
<dbReference type="OMA" id="DLQTMQH"/>
<dbReference type="OrthoDB" id="6532575at2"/>
<dbReference type="PhylomeDB" id="P05704"/>
<dbReference type="BioCyc" id="EcoCyc:TRG-MONOMER"/>
<dbReference type="PRO" id="PR:P05704"/>
<dbReference type="Proteomes" id="UP000000625">
    <property type="component" value="Chromosome"/>
</dbReference>
<dbReference type="GO" id="GO:0098561">
    <property type="term" value="C:methyl accepting chemotaxis protein complex"/>
    <property type="evidence" value="ECO:0000315"/>
    <property type="project" value="CAFA"/>
</dbReference>
<dbReference type="GO" id="GO:0005886">
    <property type="term" value="C:plasma membrane"/>
    <property type="evidence" value="ECO:0000314"/>
    <property type="project" value="EcoCyc"/>
</dbReference>
<dbReference type="GO" id="GO:0042803">
    <property type="term" value="F:protein homodimerization activity"/>
    <property type="evidence" value="ECO:0000315"/>
    <property type="project" value="CAFA"/>
</dbReference>
<dbReference type="GO" id="GO:0004888">
    <property type="term" value="F:transmembrane signaling receptor activity"/>
    <property type="evidence" value="ECO:0000315"/>
    <property type="project" value="EcoCyc"/>
</dbReference>
<dbReference type="GO" id="GO:0006935">
    <property type="term" value="P:chemotaxis"/>
    <property type="evidence" value="ECO:0000315"/>
    <property type="project" value="EcoCyc"/>
</dbReference>
<dbReference type="GO" id="GO:0007165">
    <property type="term" value="P:signal transduction"/>
    <property type="evidence" value="ECO:0000315"/>
    <property type="project" value="EcoCyc"/>
</dbReference>
<dbReference type="CDD" id="cd06225">
    <property type="entry name" value="HAMP"/>
    <property type="match status" value="1"/>
</dbReference>
<dbReference type="CDD" id="cd11386">
    <property type="entry name" value="MCP_signal"/>
    <property type="match status" value="1"/>
</dbReference>
<dbReference type="CDD" id="cd19407">
    <property type="entry name" value="Tar_Tsr_sensor"/>
    <property type="match status" value="1"/>
</dbReference>
<dbReference type="FunFam" id="1.20.120.30:FF:000003">
    <property type="entry name" value="Methyl-accepting chemotaxis protein III"/>
    <property type="match status" value="1"/>
</dbReference>
<dbReference type="FunFam" id="1.10.287.950:FF:000001">
    <property type="entry name" value="Methyl-accepting chemotaxis sensory transducer"/>
    <property type="match status" value="1"/>
</dbReference>
<dbReference type="Gene3D" id="1.20.120.30">
    <property type="entry name" value="Aspartate receptor, ligand-binding domain"/>
    <property type="match status" value="1"/>
</dbReference>
<dbReference type="Gene3D" id="1.10.287.950">
    <property type="entry name" value="Methyl-accepting chemotaxis protein"/>
    <property type="match status" value="1"/>
</dbReference>
<dbReference type="InterPro" id="IPR035440">
    <property type="entry name" value="4HB_MCP_dom_sf"/>
</dbReference>
<dbReference type="InterPro" id="IPR004090">
    <property type="entry name" value="Chemotax_Me-accpt_rcpt"/>
</dbReference>
<dbReference type="InterPro" id="IPR004091">
    <property type="entry name" value="Chemotax_Me-accpt_rcpt_Me-site"/>
</dbReference>
<dbReference type="InterPro" id="IPR003660">
    <property type="entry name" value="HAMP_dom"/>
</dbReference>
<dbReference type="InterPro" id="IPR051310">
    <property type="entry name" value="MCP_chemotaxis"/>
</dbReference>
<dbReference type="InterPro" id="IPR004089">
    <property type="entry name" value="MCPsignal_dom"/>
</dbReference>
<dbReference type="InterPro" id="IPR003122">
    <property type="entry name" value="Tar_rcpt_lig-bd"/>
</dbReference>
<dbReference type="PANTHER" id="PTHR43531:SF5">
    <property type="entry name" value="METHYL-ACCEPTING CHEMOTAXIS PROTEIN III"/>
    <property type="match status" value="1"/>
</dbReference>
<dbReference type="PANTHER" id="PTHR43531">
    <property type="entry name" value="PROTEIN ICFG"/>
    <property type="match status" value="1"/>
</dbReference>
<dbReference type="Pfam" id="PF00672">
    <property type="entry name" value="HAMP"/>
    <property type="match status" value="1"/>
</dbReference>
<dbReference type="Pfam" id="PF00015">
    <property type="entry name" value="MCPsignal"/>
    <property type="match status" value="1"/>
</dbReference>
<dbReference type="Pfam" id="PF02203">
    <property type="entry name" value="TarH"/>
    <property type="match status" value="1"/>
</dbReference>
<dbReference type="PRINTS" id="PR00260">
    <property type="entry name" value="CHEMTRNSDUCR"/>
</dbReference>
<dbReference type="SMART" id="SM00304">
    <property type="entry name" value="HAMP"/>
    <property type="match status" value="1"/>
</dbReference>
<dbReference type="SMART" id="SM00283">
    <property type="entry name" value="MA"/>
    <property type="match status" value="1"/>
</dbReference>
<dbReference type="SMART" id="SM00319">
    <property type="entry name" value="TarH"/>
    <property type="match status" value="1"/>
</dbReference>
<dbReference type="SUPFAM" id="SSF47170">
    <property type="entry name" value="Aspartate receptor, ligand-binding domain"/>
    <property type="match status" value="1"/>
</dbReference>
<dbReference type="SUPFAM" id="SSF58104">
    <property type="entry name" value="Methyl-accepting chemotaxis protein (MCP) signaling domain"/>
    <property type="match status" value="1"/>
</dbReference>
<dbReference type="PROSITE" id="PS00538">
    <property type="entry name" value="CHEMOTAXIS_TRANSDUC_1"/>
    <property type="match status" value="1"/>
</dbReference>
<dbReference type="PROSITE" id="PS50111">
    <property type="entry name" value="CHEMOTAXIS_TRANSDUC_2"/>
    <property type="match status" value="1"/>
</dbReference>
<dbReference type="PROSITE" id="PS50885">
    <property type="entry name" value="HAMP"/>
    <property type="match status" value="1"/>
</dbReference>
<organism>
    <name type="scientific">Escherichia coli (strain K12)</name>
    <dbReference type="NCBI Taxonomy" id="83333"/>
    <lineage>
        <taxon>Bacteria</taxon>
        <taxon>Pseudomonadati</taxon>
        <taxon>Pseudomonadota</taxon>
        <taxon>Gammaproteobacteria</taxon>
        <taxon>Enterobacterales</taxon>
        <taxon>Enterobacteriaceae</taxon>
        <taxon>Escherichia</taxon>
    </lineage>
</organism>
<reference key="1">
    <citation type="journal article" date="1984" name="Proc. Natl. Acad. Sci. U.S.A.">
        <title>Structure of the Trg protein: homologies with and differences from other sensory transducers of Escherichia coli.</title>
        <authorList>
            <person name="Bollinger J."/>
            <person name="Park C."/>
            <person name="Harayama S."/>
            <person name="Hazelbauer G.L."/>
        </authorList>
    </citation>
    <scope>NUCLEOTIDE SEQUENCE [GENOMIC DNA]</scope>
</reference>
<reference key="2">
    <citation type="submission" date="1999-03" db="EMBL/GenBank/DDBJ databases">
        <authorList>
            <person name="Hazelbauer G.L."/>
        </authorList>
    </citation>
    <scope>SEQUENCE REVISION</scope>
</reference>
<reference key="3">
    <citation type="journal article" date="1996" name="DNA Res.">
        <title>A 570-kb DNA sequence of the Escherichia coli K-12 genome corresponding to the 28.0-40.1 min region on the linkage map.</title>
        <authorList>
            <person name="Aiba H."/>
            <person name="Baba T."/>
            <person name="Fujita K."/>
            <person name="Hayashi K."/>
            <person name="Inada T."/>
            <person name="Isono K."/>
            <person name="Itoh T."/>
            <person name="Kasai H."/>
            <person name="Kashimoto K."/>
            <person name="Kimura S."/>
            <person name="Kitakawa M."/>
            <person name="Kitagawa M."/>
            <person name="Makino K."/>
            <person name="Miki T."/>
            <person name="Mizobuchi K."/>
            <person name="Mori H."/>
            <person name="Mori T."/>
            <person name="Motomura K."/>
            <person name="Nakade S."/>
            <person name="Nakamura Y."/>
            <person name="Nashimoto H."/>
            <person name="Nishio Y."/>
            <person name="Oshima T."/>
            <person name="Saito N."/>
            <person name="Sampei G."/>
            <person name="Seki Y."/>
            <person name="Sivasundaram S."/>
            <person name="Tagami H."/>
            <person name="Takeda J."/>
            <person name="Takemoto K."/>
            <person name="Takeuchi Y."/>
            <person name="Wada C."/>
            <person name="Yamamoto Y."/>
            <person name="Horiuchi T."/>
        </authorList>
    </citation>
    <scope>NUCLEOTIDE SEQUENCE [LARGE SCALE GENOMIC DNA]</scope>
    <source>
        <strain>K12 / W3110 / ATCC 27325 / DSM 5911</strain>
    </source>
</reference>
<reference key="4">
    <citation type="journal article" date="1997" name="Science">
        <title>The complete genome sequence of Escherichia coli K-12.</title>
        <authorList>
            <person name="Blattner F.R."/>
            <person name="Plunkett G. III"/>
            <person name="Bloch C.A."/>
            <person name="Perna N.T."/>
            <person name="Burland V."/>
            <person name="Riley M."/>
            <person name="Collado-Vides J."/>
            <person name="Glasner J.D."/>
            <person name="Rode C.K."/>
            <person name="Mayhew G.F."/>
            <person name="Gregor J."/>
            <person name="Davis N.W."/>
            <person name="Kirkpatrick H.A."/>
            <person name="Goeden M.A."/>
            <person name="Rose D.J."/>
            <person name="Mau B."/>
            <person name="Shao Y."/>
        </authorList>
    </citation>
    <scope>NUCLEOTIDE SEQUENCE [LARGE SCALE GENOMIC DNA]</scope>
    <source>
        <strain>K12 / MG1655 / ATCC 47076</strain>
    </source>
</reference>
<reference key="5">
    <citation type="journal article" date="2006" name="Mol. Syst. Biol.">
        <title>Highly accurate genome sequences of Escherichia coli K-12 strains MG1655 and W3110.</title>
        <authorList>
            <person name="Hayashi K."/>
            <person name="Morooka N."/>
            <person name="Yamamoto Y."/>
            <person name="Fujita K."/>
            <person name="Isono K."/>
            <person name="Choi S."/>
            <person name="Ohtsubo E."/>
            <person name="Baba T."/>
            <person name="Wanner B.L."/>
            <person name="Mori H."/>
            <person name="Horiuchi T."/>
        </authorList>
    </citation>
    <scope>NUCLEOTIDE SEQUENCE [LARGE SCALE GENOMIC DNA]</scope>
    <source>
        <strain>K12 / W3110 / ATCC 27325 / DSM 5911</strain>
    </source>
</reference>
<reference key="6">
    <citation type="journal article" date="1983" name="J. Biol. Chem.">
        <title>Multiple covalent modifications of Trg, a sensory transducer of Escherichia coli.</title>
        <authorList>
            <person name="Kehry M.R."/>
            <person name="Engstrom P."/>
            <person name="Dahlquist F.W."/>
            <person name="Hazelbauer G.L."/>
        </authorList>
    </citation>
    <scope>DEAMIDATION AT GLN-312 AND GLN-319</scope>
    <scope>METHYLATION AT GLU-305; GLN-312; GLN-319; GLU-501 AND GLU-510</scope>
</reference>
<reference key="7">
    <citation type="journal article" date="2005" name="Science">
        <title>Global topology analysis of the Escherichia coli inner membrane proteome.</title>
        <authorList>
            <person name="Daley D.O."/>
            <person name="Rapp M."/>
            <person name="Granseth E."/>
            <person name="Melen K."/>
            <person name="Drew D."/>
            <person name="von Heijne G."/>
        </authorList>
    </citation>
    <scope>SUBCELLULAR LOCATION</scope>
    <source>
        <strain>K12 / MG1655 / ATCC 47076</strain>
    </source>
</reference>
<reference key="8">
    <citation type="journal article" date="2012" name="Mol. Microbiol.">
        <title>Isolation and identification of new inner membrane-associated proteins that localize to cell poles in Escherichia coli.</title>
        <authorList>
            <person name="Li G."/>
            <person name="Young K.D."/>
        </authorList>
    </citation>
    <scope>SUBCELLULAR LOCATION</scope>
    <source>
        <strain>K12 / MG1655 / ATCC 47076</strain>
    </source>
</reference>
<name>MCP3_ECOLI</name>
<sequence length="546" mass="58899">MNTTPSQRLGFLHHIRLVPLFACILGGILVLFALSSALAGYFLWQADRDQRDVTAEIEIRTGLANSSDFLRSARINMIQAGAASRIAEMEAMKRNIAQAESEIKQSQQGYRAYQNRPVKTPADEALDTELNQRFQAYITGMQPMLKYAKNGMFEAIINHESEQIRPLDNAYTDILNKAVKIRSTRANQLAELAHQRTRLGGMFMIGAFVLALVMTLITFMVLRRIVIRPLQHAAQRIEKIASGDLTMNDEPAGRNEIGRLSRHLQQMQHSLGMTVGTVRQGAEEIYRGTSEISAGNADLSSRTEEQAAAIEQTAASMEQLTATVKQNADNAHHASKLAQEASIKASDGGQTVSGVVKTMGAISTSSKKISEITAVINSIAFQTNILALNAAVEAARAGEQGRGFAVVASEVRTLASRSAQAAKEIEGLISESVRLIDLGSDEVATAGKTMSTIVDAVASVTHIMQEIAAASDEQSRGITQVSQAISEMDKVTQQNASLVEEASAAAVSLEEQAARLTEAVDVFRLHKHSVSAEPRGAGEPVSFATV</sequence>